<reference key="1">
    <citation type="journal article" date="2009" name="BMC Genomics">
        <title>Evidence for niche adaptation in the genome of the bovine pathogen Streptococcus uberis.</title>
        <authorList>
            <person name="Ward P.N."/>
            <person name="Holden M.T.G."/>
            <person name="Leigh J.A."/>
            <person name="Lennard N."/>
            <person name="Bignell A."/>
            <person name="Barron A."/>
            <person name="Clark L."/>
            <person name="Quail M.A."/>
            <person name="Woodward J."/>
            <person name="Barrell B.G."/>
            <person name="Egan S.A."/>
            <person name="Field T.R."/>
            <person name="Maskell D."/>
            <person name="Kehoe M."/>
            <person name="Dowson C.G."/>
            <person name="Chanter N."/>
            <person name="Whatmore A.M."/>
            <person name="Bentley S.D."/>
            <person name="Parkhill J."/>
        </authorList>
    </citation>
    <scope>NUCLEOTIDE SEQUENCE [LARGE SCALE GENOMIC DNA]</scope>
    <source>
        <strain>ATCC BAA-854 / 0140J</strain>
    </source>
</reference>
<protein>
    <recommendedName>
        <fullName evidence="1">tRNA-specific 2-thiouridylase MnmA</fullName>
        <ecNumber evidence="1">2.8.1.13</ecNumber>
    </recommendedName>
</protein>
<sequence length="373" mass="41756">MSDNSKIRVVVGMSGGVDSSVTALLLKEQGYDVIGVFMKNWDDTDEFGVCTATEDYKDVAAVADQIGIPYYSVNFEKEYWDRVFEYFLSEYKAGRTPNPDVMCNKEIKFKAFLDYAMTLGADYVATGHYAQVRRDEDGIVHMLRGVDNGKDQTYFLSQLSQEQLQKTMFPLGHLQKSEVREIAERAGLATAKKKDSTGICFIGEKNFKQFLSQYLPAQKGRMMTVDGRDMGEHAGLMYYTIGQRGGLGIGGQHGGDNQPWFVVGKDLSKNILYVGQGFYHESLMSTSLQASVIHFTRDMPSEFTLECTAKFRYRQPDSKVTVYVKGEHAEVVFDEPQRAITPGQAVVFYDAEECLGGGIIDMAFKDGVACQYI</sequence>
<evidence type="ECO:0000255" key="1">
    <source>
        <dbReference type="HAMAP-Rule" id="MF_00144"/>
    </source>
</evidence>
<organism>
    <name type="scientific">Streptococcus uberis (strain ATCC BAA-854 / 0140J)</name>
    <dbReference type="NCBI Taxonomy" id="218495"/>
    <lineage>
        <taxon>Bacteria</taxon>
        <taxon>Bacillati</taxon>
        <taxon>Bacillota</taxon>
        <taxon>Bacilli</taxon>
        <taxon>Lactobacillales</taxon>
        <taxon>Streptococcaceae</taxon>
        <taxon>Streptococcus</taxon>
    </lineage>
</organism>
<keyword id="KW-0067">ATP-binding</keyword>
<keyword id="KW-0963">Cytoplasm</keyword>
<keyword id="KW-1015">Disulfide bond</keyword>
<keyword id="KW-0547">Nucleotide-binding</keyword>
<keyword id="KW-1185">Reference proteome</keyword>
<keyword id="KW-0694">RNA-binding</keyword>
<keyword id="KW-0808">Transferase</keyword>
<keyword id="KW-0819">tRNA processing</keyword>
<keyword id="KW-0820">tRNA-binding</keyword>
<gene>
    <name evidence="1" type="primary">mnmA</name>
    <name type="ordered locus">SUB1847</name>
</gene>
<feature type="chain" id="PRO_1000198634" description="tRNA-specific 2-thiouridylase MnmA">
    <location>
        <begin position="1"/>
        <end position="373"/>
    </location>
</feature>
<feature type="region of interest" description="Interaction with target base in tRNA" evidence="1">
    <location>
        <begin position="98"/>
        <end position="100"/>
    </location>
</feature>
<feature type="region of interest" description="Interaction with tRNA" evidence="1">
    <location>
        <begin position="150"/>
        <end position="152"/>
    </location>
</feature>
<feature type="region of interest" description="Interaction with tRNA" evidence="1">
    <location>
        <begin position="312"/>
        <end position="313"/>
    </location>
</feature>
<feature type="active site" description="Nucleophile" evidence="1">
    <location>
        <position position="103"/>
    </location>
</feature>
<feature type="active site" description="Cysteine persulfide intermediate" evidence="1">
    <location>
        <position position="200"/>
    </location>
</feature>
<feature type="binding site" evidence="1">
    <location>
        <begin position="12"/>
        <end position="19"/>
    </location>
    <ligand>
        <name>ATP</name>
        <dbReference type="ChEBI" id="CHEBI:30616"/>
    </ligand>
</feature>
<feature type="binding site" evidence="1">
    <location>
        <position position="38"/>
    </location>
    <ligand>
        <name>ATP</name>
        <dbReference type="ChEBI" id="CHEBI:30616"/>
    </ligand>
</feature>
<feature type="binding site" evidence="1">
    <location>
        <position position="127"/>
    </location>
    <ligand>
        <name>ATP</name>
        <dbReference type="ChEBI" id="CHEBI:30616"/>
    </ligand>
</feature>
<feature type="site" description="Interaction with tRNA" evidence="1">
    <location>
        <position position="128"/>
    </location>
</feature>
<feature type="site" description="Interaction with tRNA" evidence="1">
    <location>
        <position position="344"/>
    </location>
</feature>
<feature type="disulfide bond" description="Alternate" evidence="1">
    <location>
        <begin position="103"/>
        <end position="200"/>
    </location>
</feature>
<accession>B9DWD3</accession>
<proteinExistence type="inferred from homology"/>
<comment type="function">
    <text evidence="1">Catalyzes the 2-thiolation of uridine at the wobble position (U34) of tRNA, leading to the formation of s(2)U34.</text>
</comment>
<comment type="catalytic activity">
    <reaction evidence="1">
        <text>S-sulfanyl-L-cysteinyl-[protein] + uridine(34) in tRNA + AH2 + ATP = 2-thiouridine(34) in tRNA + L-cysteinyl-[protein] + A + AMP + diphosphate + H(+)</text>
        <dbReference type="Rhea" id="RHEA:47032"/>
        <dbReference type="Rhea" id="RHEA-COMP:10131"/>
        <dbReference type="Rhea" id="RHEA-COMP:11726"/>
        <dbReference type="Rhea" id="RHEA-COMP:11727"/>
        <dbReference type="Rhea" id="RHEA-COMP:11728"/>
        <dbReference type="ChEBI" id="CHEBI:13193"/>
        <dbReference type="ChEBI" id="CHEBI:15378"/>
        <dbReference type="ChEBI" id="CHEBI:17499"/>
        <dbReference type="ChEBI" id="CHEBI:29950"/>
        <dbReference type="ChEBI" id="CHEBI:30616"/>
        <dbReference type="ChEBI" id="CHEBI:33019"/>
        <dbReference type="ChEBI" id="CHEBI:61963"/>
        <dbReference type="ChEBI" id="CHEBI:65315"/>
        <dbReference type="ChEBI" id="CHEBI:87170"/>
        <dbReference type="ChEBI" id="CHEBI:456215"/>
        <dbReference type="EC" id="2.8.1.13"/>
    </reaction>
</comment>
<comment type="subcellular location">
    <subcellularLocation>
        <location evidence="1">Cytoplasm</location>
    </subcellularLocation>
</comment>
<comment type="similarity">
    <text evidence="1">Belongs to the MnmA/TRMU family.</text>
</comment>
<name>MNMA_STRU0</name>
<dbReference type="EC" id="2.8.1.13" evidence="1"/>
<dbReference type="EMBL" id="AM946015">
    <property type="protein sequence ID" value="CAR43910.1"/>
    <property type="molecule type" value="Genomic_DNA"/>
</dbReference>
<dbReference type="RefSeq" id="WP_015912132.1">
    <property type="nucleotide sequence ID" value="NC_012004.1"/>
</dbReference>
<dbReference type="SMR" id="B9DWD3"/>
<dbReference type="STRING" id="218495.SUB1847"/>
<dbReference type="KEGG" id="sub:SUB1847"/>
<dbReference type="eggNOG" id="COG0482">
    <property type="taxonomic scope" value="Bacteria"/>
</dbReference>
<dbReference type="HOGENOM" id="CLU_035188_1_0_9"/>
<dbReference type="OrthoDB" id="9800696at2"/>
<dbReference type="Proteomes" id="UP000000449">
    <property type="component" value="Chromosome"/>
</dbReference>
<dbReference type="GO" id="GO:0005737">
    <property type="term" value="C:cytoplasm"/>
    <property type="evidence" value="ECO:0007669"/>
    <property type="project" value="UniProtKB-SubCell"/>
</dbReference>
<dbReference type="GO" id="GO:0005524">
    <property type="term" value="F:ATP binding"/>
    <property type="evidence" value="ECO:0007669"/>
    <property type="project" value="UniProtKB-KW"/>
</dbReference>
<dbReference type="GO" id="GO:0000049">
    <property type="term" value="F:tRNA binding"/>
    <property type="evidence" value="ECO:0007669"/>
    <property type="project" value="UniProtKB-KW"/>
</dbReference>
<dbReference type="GO" id="GO:0103016">
    <property type="term" value="F:tRNA-uridine 2-sulfurtransferase activity"/>
    <property type="evidence" value="ECO:0007669"/>
    <property type="project" value="UniProtKB-EC"/>
</dbReference>
<dbReference type="GO" id="GO:0002143">
    <property type="term" value="P:tRNA wobble position uridine thiolation"/>
    <property type="evidence" value="ECO:0007669"/>
    <property type="project" value="TreeGrafter"/>
</dbReference>
<dbReference type="CDD" id="cd01998">
    <property type="entry name" value="MnmA_TRMU-like"/>
    <property type="match status" value="1"/>
</dbReference>
<dbReference type="FunFam" id="2.30.30.280:FF:000001">
    <property type="entry name" value="tRNA-specific 2-thiouridylase MnmA"/>
    <property type="match status" value="1"/>
</dbReference>
<dbReference type="FunFam" id="2.40.30.10:FF:000023">
    <property type="entry name" value="tRNA-specific 2-thiouridylase MnmA"/>
    <property type="match status" value="1"/>
</dbReference>
<dbReference type="FunFam" id="3.40.50.620:FF:000004">
    <property type="entry name" value="tRNA-specific 2-thiouridylase MnmA"/>
    <property type="match status" value="1"/>
</dbReference>
<dbReference type="Gene3D" id="2.30.30.280">
    <property type="entry name" value="Adenine nucleotide alpha hydrolases-like domains"/>
    <property type="match status" value="1"/>
</dbReference>
<dbReference type="Gene3D" id="3.40.50.620">
    <property type="entry name" value="HUPs"/>
    <property type="match status" value="1"/>
</dbReference>
<dbReference type="Gene3D" id="2.40.30.10">
    <property type="entry name" value="Translation factors"/>
    <property type="match status" value="1"/>
</dbReference>
<dbReference type="HAMAP" id="MF_00144">
    <property type="entry name" value="tRNA_thiouridyl_MnmA"/>
    <property type="match status" value="1"/>
</dbReference>
<dbReference type="InterPro" id="IPR004506">
    <property type="entry name" value="MnmA-like"/>
</dbReference>
<dbReference type="InterPro" id="IPR046885">
    <property type="entry name" value="MnmA-like_C"/>
</dbReference>
<dbReference type="InterPro" id="IPR046884">
    <property type="entry name" value="MnmA-like_central"/>
</dbReference>
<dbReference type="InterPro" id="IPR023382">
    <property type="entry name" value="MnmA-like_central_sf"/>
</dbReference>
<dbReference type="InterPro" id="IPR014729">
    <property type="entry name" value="Rossmann-like_a/b/a_fold"/>
</dbReference>
<dbReference type="NCBIfam" id="NF001138">
    <property type="entry name" value="PRK00143.1"/>
    <property type="match status" value="1"/>
</dbReference>
<dbReference type="NCBIfam" id="TIGR00420">
    <property type="entry name" value="trmU"/>
    <property type="match status" value="1"/>
</dbReference>
<dbReference type="PANTHER" id="PTHR11933:SF5">
    <property type="entry name" value="MITOCHONDRIAL TRNA-SPECIFIC 2-THIOURIDYLASE 1"/>
    <property type="match status" value="1"/>
</dbReference>
<dbReference type="PANTHER" id="PTHR11933">
    <property type="entry name" value="TRNA 5-METHYLAMINOMETHYL-2-THIOURIDYLATE -METHYLTRANSFERASE"/>
    <property type="match status" value="1"/>
</dbReference>
<dbReference type="Pfam" id="PF03054">
    <property type="entry name" value="tRNA_Me_trans"/>
    <property type="match status" value="1"/>
</dbReference>
<dbReference type="Pfam" id="PF20258">
    <property type="entry name" value="tRNA_Me_trans_C"/>
    <property type="match status" value="1"/>
</dbReference>
<dbReference type="Pfam" id="PF20259">
    <property type="entry name" value="tRNA_Me_trans_M"/>
    <property type="match status" value="1"/>
</dbReference>
<dbReference type="SUPFAM" id="SSF52402">
    <property type="entry name" value="Adenine nucleotide alpha hydrolases-like"/>
    <property type="match status" value="1"/>
</dbReference>